<protein>
    <recommendedName>
        <fullName evidence="1">Phosphoribosylaminoimidazole-succinocarboxamide synthase</fullName>
        <ecNumber evidence="1">6.3.2.6</ecNumber>
    </recommendedName>
    <alternativeName>
        <fullName evidence="1">SAICAR synthetase</fullName>
    </alternativeName>
</protein>
<feature type="chain" id="PRO_1000203223" description="Phosphoribosylaminoimidazole-succinocarboxamide synthase">
    <location>
        <begin position="1"/>
        <end position="237"/>
    </location>
</feature>
<proteinExistence type="inferred from homology"/>
<evidence type="ECO:0000255" key="1">
    <source>
        <dbReference type="HAMAP-Rule" id="MF_00137"/>
    </source>
</evidence>
<organism>
    <name type="scientific">Deinococcus deserti (strain DSM 17065 / CIP 109153 / LMG 22923 / VCD115)</name>
    <dbReference type="NCBI Taxonomy" id="546414"/>
    <lineage>
        <taxon>Bacteria</taxon>
        <taxon>Thermotogati</taxon>
        <taxon>Deinococcota</taxon>
        <taxon>Deinococci</taxon>
        <taxon>Deinococcales</taxon>
        <taxon>Deinococcaceae</taxon>
        <taxon>Deinococcus</taxon>
    </lineage>
</organism>
<accession>C1CYX1</accession>
<comment type="catalytic activity">
    <reaction evidence="1">
        <text>5-amino-1-(5-phospho-D-ribosyl)imidazole-4-carboxylate + L-aspartate + ATP = (2S)-2-[5-amino-1-(5-phospho-beta-D-ribosyl)imidazole-4-carboxamido]succinate + ADP + phosphate + 2 H(+)</text>
        <dbReference type="Rhea" id="RHEA:22628"/>
        <dbReference type="ChEBI" id="CHEBI:15378"/>
        <dbReference type="ChEBI" id="CHEBI:29991"/>
        <dbReference type="ChEBI" id="CHEBI:30616"/>
        <dbReference type="ChEBI" id="CHEBI:43474"/>
        <dbReference type="ChEBI" id="CHEBI:58443"/>
        <dbReference type="ChEBI" id="CHEBI:77657"/>
        <dbReference type="ChEBI" id="CHEBI:456216"/>
        <dbReference type="EC" id="6.3.2.6"/>
    </reaction>
</comment>
<comment type="pathway">
    <text evidence="1">Purine metabolism; IMP biosynthesis via de novo pathway; 5-amino-1-(5-phospho-D-ribosyl)imidazole-4-carboxamide from 5-amino-1-(5-phospho-D-ribosyl)imidazole-4-carboxylate: step 1/2.</text>
</comment>
<comment type="similarity">
    <text evidence="1">Belongs to the SAICAR synthetase family.</text>
</comment>
<reference key="1">
    <citation type="journal article" date="2009" name="PLoS Genet.">
        <title>Alliance of proteomics and genomics to unravel the specificities of Sahara bacterium Deinococcus deserti.</title>
        <authorList>
            <person name="de Groot A."/>
            <person name="Dulermo R."/>
            <person name="Ortet P."/>
            <person name="Blanchard L."/>
            <person name="Guerin P."/>
            <person name="Fernandez B."/>
            <person name="Vacherie B."/>
            <person name="Dossat C."/>
            <person name="Jolivet E."/>
            <person name="Siguier P."/>
            <person name="Chandler M."/>
            <person name="Barakat M."/>
            <person name="Dedieu A."/>
            <person name="Barbe V."/>
            <person name="Heulin T."/>
            <person name="Sommer S."/>
            <person name="Achouak W."/>
            <person name="Armengaud J."/>
        </authorList>
    </citation>
    <scope>NUCLEOTIDE SEQUENCE [LARGE SCALE GENOMIC DNA]</scope>
    <source>
        <strain>DSM 17065 / CIP 109153 / LMG 22923 / VCD115</strain>
    </source>
</reference>
<name>PUR7_DEIDV</name>
<gene>
    <name evidence="1" type="primary">purC</name>
    <name type="ordered locus">Deide_21270</name>
</gene>
<keyword id="KW-0067">ATP-binding</keyword>
<keyword id="KW-0436">Ligase</keyword>
<keyword id="KW-0547">Nucleotide-binding</keyword>
<keyword id="KW-0658">Purine biosynthesis</keyword>
<keyword id="KW-1185">Reference proteome</keyword>
<dbReference type="EC" id="6.3.2.6" evidence="1"/>
<dbReference type="EMBL" id="CP001114">
    <property type="protein sequence ID" value="ACO47151.1"/>
    <property type="molecule type" value="Genomic_DNA"/>
</dbReference>
<dbReference type="RefSeq" id="WP_012694272.1">
    <property type="nucleotide sequence ID" value="NC_012526.1"/>
</dbReference>
<dbReference type="SMR" id="C1CYX1"/>
<dbReference type="STRING" id="546414.Deide_21270"/>
<dbReference type="PaxDb" id="546414-Deide_21270"/>
<dbReference type="KEGG" id="ddr:Deide_21270"/>
<dbReference type="eggNOG" id="COG0152">
    <property type="taxonomic scope" value="Bacteria"/>
</dbReference>
<dbReference type="HOGENOM" id="CLU_061495_2_0_0"/>
<dbReference type="OrthoDB" id="9801549at2"/>
<dbReference type="UniPathway" id="UPA00074">
    <property type="reaction ID" value="UER00131"/>
</dbReference>
<dbReference type="Proteomes" id="UP000002208">
    <property type="component" value="Chromosome"/>
</dbReference>
<dbReference type="GO" id="GO:0005524">
    <property type="term" value="F:ATP binding"/>
    <property type="evidence" value="ECO:0007669"/>
    <property type="project" value="UniProtKB-KW"/>
</dbReference>
<dbReference type="GO" id="GO:0004639">
    <property type="term" value="F:phosphoribosylaminoimidazolesuccinocarboxamide synthase activity"/>
    <property type="evidence" value="ECO:0007669"/>
    <property type="project" value="UniProtKB-UniRule"/>
</dbReference>
<dbReference type="GO" id="GO:0006189">
    <property type="term" value="P:'de novo' IMP biosynthetic process"/>
    <property type="evidence" value="ECO:0007669"/>
    <property type="project" value="UniProtKB-UniRule"/>
</dbReference>
<dbReference type="GO" id="GO:0009236">
    <property type="term" value="P:cobalamin biosynthetic process"/>
    <property type="evidence" value="ECO:0007669"/>
    <property type="project" value="InterPro"/>
</dbReference>
<dbReference type="CDD" id="cd01415">
    <property type="entry name" value="SAICAR_synt_PurC"/>
    <property type="match status" value="1"/>
</dbReference>
<dbReference type="FunFam" id="3.30.470.20:FF:000006">
    <property type="entry name" value="Phosphoribosylaminoimidazole-succinocarboxamide synthase"/>
    <property type="match status" value="1"/>
</dbReference>
<dbReference type="Gene3D" id="3.30.470.20">
    <property type="entry name" value="ATP-grasp fold, B domain"/>
    <property type="match status" value="1"/>
</dbReference>
<dbReference type="Gene3D" id="3.30.200.20">
    <property type="entry name" value="Phosphorylase Kinase, domain 1"/>
    <property type="match status" value="1"/>
</dbReference>
<dbReference type="HAMAP" id="MF_00137">
    <property type="entry name" value="SAICAR_synth"/>
    <property type="match status" value="1"/>
</dbReference>
<dbReference type="InterPro" id="IPR028923">
    <property type="entry name" value="SAICAR_synt/ADE2_N"/>
</dbReference>
<dbReference type="InterPro" id="IPR033934">
    <property type="entry name" value="SAICAR_synt_PurC"/>
</dbReference>
<dbReference type="InterPro" id="IPR001636">
    <property type="entry name" value="SAICAR_synth"/>
</dbReference>
<dbReference type="InterPro" id="IPR050089">
    <property type="entry name" value="SAICAR_synthetase"/>
</dbReference>
<dbReference type="InterPro" id="IPR018236">
    <property type="entry name" value="SAICAR_synthetase_CS"/>
</dbReference>
<dbReference type="NCBIfam" id="TIGR00081">
    <property type="entry name" value="purC"/>
    <property type="match status" value="1"/>
</dbReference>
<dbReference type="PANTHER" id="PTHR43599">
    <property type="entry name" value="MULTIFUNCTIONAL PROTEIN ADE2"/>
    <property type="match status" value="1"/>
</dbReference>
<dbReference type="PANTHER" id="PTHR43599:SF3">
    <property type="entry name" value="SI:DKEY-6E2.2"/>
    <property type="match status" value="1"/>
</dbReference>
<dbReference type="Pfam" id="PF01259">
    <property type="entry name" value="SAICAR_synt"/>
    <property type="match status" value="1"/>
</dbReference>
<dbReference type="SUPFAM" id="SSF56104">
    <property type="entry name" value="SAICAR synthase-like"/>
    <property type="match status" value="1"/>
</dbReference>
<dbReference type="PROSITE" id="PS01057">
    <property type="entry name" value="SAICAR_SYNTHETASE_1"/>
    <property type="match status" value="1"/>
</dbReference>
<dbReference type="PROSITE" id="PS01058">
    <property type="entry name" value="SAICAR_SYNTHETASE_2"/>
    <property type="match status" value="1"/>
</dbReference>
<sequence>MTRGEMKYEGKAKRVYATEQAGEYIVEYKDDATAFNGVKKAQIMGKGEINNAITAHLYPLLEAAGIPTHFLEKLSDREQRVRAVTIVPVEIIVRNVAAGSFSKRLGIEEGTPLPRPVVEYCYKSDALGDPLINTDTAVALGWATEADLARIRELSLQVRDFLVPYFEARGVRLVDFKLEFGKLSSGEIVLADEISPDTCRFWDAQTNEKMDKDRFRRDLGGVEDAYAEMLRRVTQSV</sequence>